<sequence>MRTLTILTAVLLVALQAKAEPLQAEDDPLQAKAYEADAQEQRGANDQDFAVSFAEDASSSLRALGSTRAFTCHCRRSCYSTEYSYGTCTVMGINHRFCCL</sequence>
<proteinExistence type="evidence at protein level"/>
<evidence type="ECO:0000255" key="1"/>
<evidence type="ECO:0000269" key="2">
    <source>
    </source>
</evidence>
<evidence type="ECO:0000269" key="3">
    <source>
    </source>
</evidence>
<evidence type="ECO:0000269" key="4">
    <source>
    </source>
</evidence>
<evidence type="ECO:0000269" key="5">
    <source>
    </source>
</evidence>
<evidence type="ECO:0000269" key="6">
    <source>
    </source>
</evidence>
<evidence type="ECO:0000269" key="7">
    <source>
    </source>
</evidence>
<evidence type="ECO:0000269" key="8">
    <source>
    </source>
</evidence>
<evidence type="ECO:0000269" key="9">
    <source>
    </source>
</evidence>
<evidence type="ECO:0000269" key="10">
    <source>
    </source>
</evidence>
<evidence type="ECO:0000269" key="11">
    <source>
    </source>
</evidence>
<evidence type="ECO:0000305" key="12"/>
<evidence type="ECO:0007744" key="13">
    <source>
        <dbReference type="PDB" id="1ZMQ"/>
    </source>
</evidence>
<evidence type="ECO:0007744" key="14">
    <source>
        <dbReference type="PDB" id="3QTE"/>
    </source>
</evidence>
<evidence type="ECO:0007829" key="15">
    <source>
        <dbReference type="PDB" id="1ZMQ"/>
    </source>
</evidence>
<comment type="function">
    <text evidence="2 3 4 5 6 7 8">Host-defense peptide that contributes to intestinal innate immunity and mediates homeostasis at mucosal surfaces by forming higher-order oligomers that capture bacteria and prevent microbial invasion of the epithelium (PubMed:15616305, PubMed:17088326, PubMed:25158166, PubMed:25354318, PubMed:28026958). After binding to bacterial surface proteins, undergoes ordered self-assembly to form fibril-like nanonets that surround and entangle bacteria and thereby prevent bacterial invasion across the epithelial barrier (PubMed:22722251). Entangles and agglutinates Gram-negative bacteria, such as E.coli, S.typhimurium and Y.enterocolitica, and Gram-positive bacteria such as L.monocytogenes, thereby protecting the intestine against invasion by enteric bacterial pathogens (PubMed:22722251, PubMed:25158166, PubMed:27076903). Blocks adhesion of C.albicans to intestinal epithelial cells and thereby suppresses fungal invasion of epithelial cells and biofilm formation (PubMed:28026958). Under reducing conditions and in an acidic environment similar to the intestinal milieu, exhibits inhibitory activity against anaerobic bacteria such as B.adolescentis, L.acidophilus and B.breve, as well as B.longum and S.thermophilus, possibly by leading to alterations in bacterial cell envelope structures (PubMed:25354318). The disulfide-linked oxidized form exhibits negligible antimicrobial activity against Gram-negative and Gram-positive bacteria, as compared to the enteric defensin DEFA5 (PubMed:15616305, PubMed:17088326).</text>
</comment>
<comment type="subunit">
    <text evidence="3 4 7 9">Homodimer (PubMed:17088326, PubMed:27076903). Self-assembles into higher-order oligomers termed nanonets, fibril-like structures that entrap microbes (PubMed:22722251). Self-assembly into nanonets seems to protect against proteolytic digestion in duodenal fluid (PubMed:30808760). Interacts with Y.enterocolitica invasin and S.typhimurium fliC/flagellin; the interaction creates an anchoring site for progressive DEFA6 self-assembly into nanonets (PubMed:22722251).</text>
</comment>
<comment type="interaction">
    <interactant intactId="EBI-10222451">
        <id>Q01524</id>
    </interactant>
    <interactant intactId="EBI-744081">
        <id>Q96EQ0</id>
        <label>SGTB</label>
    </interactant>
    <organismsDiffer>false</organismsDiffer>
    <experiments>3</experiments>
</comment>
<comment type="interaction">
    <interactant intactId="EBI-10222451">
        <id>Q01524</id>
    </interactant>
    <interactant intactId="EBI-741480">
        <id>Q9UMX0</id>
        <label>UBQLN1</label>
    </interactant>
    <organismsDiffer>false</organismsDiffer>
    <experiments>4</experiments>
</comment>
<comment type="interaction">
    <interactant intactId="EBI-10222451">
        <id>Q01524</id>
    </interactant>
    <interactant intactId="EBI-10173939">
        <id>Q9UMX0-2</id>
        <label>UBQLN1</label>
    </interactant>
    <organismsDiffer>false</organismsDiffer>
    <experiments>3</experiments>
</comment>
<comment type="interaction">
    <interactant intactId="EBI-10222451">
        <id>Q01524</id>
    </interactant>
    <interactant intactId="EBI-947187">
        <id>Q9UHD9</id>
        <label>UBQLN2</label>
    </interactant>
    <organismsDiffer>false</organismsDiffer>
    <experiments>6</experiments>
</comment>
<comment type="subcellular location">
    <subcellularLocation>
        <location evidence="7">Secreted</location>
    </subcellularLocation>
    <subcellularLocation>
        <location evidence="7">Cytoplasmic vesicle</location>
        <location evidence="7">Secretory vesicle</location>
    </subcellularLocation>
    <text evidence="7">Stored as propeptide in secretory granules of small intestinal Paneth cells and found in the ileum lumen as mature peptide.</text>
</comment>
<comment type="tissue specificity">
    <text evidence="7 10 11">Expressed in Paneth cells of the small intestine (at protein level).</text>
</comment>
<comment type="PTM">
    <text evidence="7">Proteolytically cleaved by trypsin at Arg-68; the propeptide is stored in the tissue of the small intestine and the mature peptide is found in the luminal fluid; cleavage may occur during or after release into the lumen (PubMed:27076903). The N-terminal propeptide region suppresses self-assembly and renders DEFA6 propeptide unable to agglutinate bacteria and protect human epithelial cells from bacterial invasion (PubMed:27076903).</text>
</comment>
<comment type="PTM">
    <text evidence="2 3 6 9">Under reducing conditions, naturally present in the gut owing to the low redox potential or enzymatically generated by the thioredoxin system, the disulfide bridges are opened leading to a conformational change of DEF6, thereby changing its antimicrobial spectrum (PubMed:25354318). The reduced form exhibits inhibitory activity against anaerobic bacteria, in contrast to the minimal antimicrobial activity of the disulfide-linked oxidized form (PubMed:15616305, PubMed:17088326, PubMed:25354318). The formation of higher-order nanonets and bacterial entrapment is independent of the redox state (PubMed:30808760).</text>
</comment>
<comment type="mass spectrometry">
    <molecule>Defensin-6</molecule>
</comment>
<comment type="mass spectrometry">
    <molecule>Defensin-6</molecule>
    <text>Oxidized form.</text>
</comment>
<comment type="similarity">
    <text evidence="12">Belongs to the alpha-defensin family.</text>
</comment>
<feature type="signal peptide" evidence="1">
    <location>
        <begin position="1"/>
        <end position="19"/>
    </location>
</feature>
<feature type="propeptide" id="PRO_0000006790" evidence="7">
    <location>
        <begin position="20"/>
        <end position="68"/>
    </location>
</feature>
<feature type="peptide" id="PRO_0000006791" description="Defensin-6" evidence="7">
    <location>
        <begin position="69"/>
        <end position="100"/>
    </location>
</feature>
<feature type="disulfide bond" evidence="3 4 5 13 14">
    <location>
        <begin position="72"/>
        <end position="99"/>
    </location>
</feature>
<feature type="disulfide bond" evidence="3 4 5 13 14">
    <location>
        <begin position="74"/>
        <end position="88"/>
    </location>
</feature>
<feature type="disulfide bond" evidence="3 4 5 13 14">
    <location>
        <begin position="78"/>
        <end position="98"/>
    </location>
</feature>
<feature type="mutagenesis site" description="Abrogates self-assembly to fibrils and attenuates agglutination of bacteria and prevention of L.monocytogenes invasion. Fails to block intestinal cell adhesion and biofilm formation of C.albicans." evidence="5 8">
    <original>F</original>
    <variation>A</variation>
    <location>
        <position position="70"/>
    </location>
</feature>
<feature type="mutagenesis site" description="Perturbs self-assembly to fibrils and reduces agglutination of bacteria." evidence="5">
    <original>V</original>
    <variation>T</variation>
    <location>
        <position position="90"/>
    </location>
</feature>
<feature type="mutagenesis site" description="Perturbs self-assembly to fibrils and reduces agglutination of bacteria." evidence="5">
    <original>I</original>
    <variation>T</variation>
    <location>
        <position position="93"/>
    </location>
</feature>
<feature type="mutagenesis site" description="Does not impact fibril formation or agglutination of bacteria." evidence="5">
    <original>H</original>
    <variation>A</variation>
    <location>
        <position position="95"/>
    </location>
</feature>
<feature type="mutagenesis site" description="Perturbs self-assembly to fibrils and reduces agglutination of bacteria. Does not abolish antimicrobial activity against B.adolescentis and formation of extracellular net-like structures (under reducing conditions)." evidence="4 5 6">
    <original>H</original>
    <variation>W</variation>
    <location>
        <position position="95"/>
    </location>
</feature>
<feature type="mutagenesis site" description="Abrogates self-assembly to fibrils and attenuates agglutination of bacteria and prevention of L.monocytogenes invasion." evidence="5">
    <original>F</original>
    <variation>A</variation>
    <location>
        <position position="97"/>
    </location>
</feature>
<feature type="strand" evidence="15">
    <location>
        <begin position="70"/>
        <end position="77"/>
    </location>
</feature>
<feature type="strand" evidence="15">
    <location>
        <begin position="82"/>
        <end position="90"/>
    </location>
</feature>
<feature type="strand" evidence="15">
    <location>
        <begin position="93"/>
        <end position="100"/>
    </location>
</feature>
<gene>
    <name type="primary">DEFA6</name>
    <name type="synonym">DEF6</name>
</gene>
<reference key="1">
    <citation type="journal article" date="1993" name="FEBS Lett.">
        <title>Defensin-6 mRNA in human Paneth cells: implications for antimicrobial peptides in host defense of the human bowel.</title>
        <authorList>
            <person name="Jones D.E."/>
            <person name="Bevins C.L."/>
        </authorList>
    </citation>
    <scope>NUCLEOTIDE SEQUENCE [MRNA]</scope>
    <scope>TISSUE SPECIFICITY</scope>
    <source>
        <tissue>Intestine</tissue>
    </source>
</reference>
<reference key="2">
    <citation type="journal article" date="1996" name="J. Biol. Chem.">
        <title>Human enteric defensins. Gene structure and developmental expression.</title>
        <authorList>
            <person name="Mallow E.B."/>
            <person name="Harris A."/>
            <person name="Salzman N."/>
            <person name="Russell J.P."/>
            <person name="Deberardinis R.J."/>
            <person name="Ruchelli E."/>
            <person name="Bevins C.L."/>
        </authorList>
    </citation>
    <scope>NUCLEOTIDE SEQUENCE [GENOMIC DNA]</scope>
    <scope>TISSUE SPECIFICITY</scope>
</reference>
<reference key="3">
    <citation type="journal article" date="2006" name="Nature">
        <title>DNA sequence and analysis of human chromosome 8.</title>
        <authorList>
            <person name="Nusbaum C."/>
            <person name="Mikkelsen T.S."/>
            <person name="Zody M.C."/>
            <person name="Asakawa S."/>
            <person name="Taudien S."/>
            <person name="Garber M."/>
            <person name="Kodira C.D."/>
            <person name="Schueler M.G."/>
            <person name="Shimizu A."/>
            <person name="Whittaker C.A."/>
            <person name="Chang J.L."/>
            <person name="Cuomo C.A."/>
            <person name="Dewar K."/>
            <person name="FitzGerald M.G."/>
            <person name="Yang X."/>
            <person name="Allen N.R."/>
            <person name="Anderson S."/>
            <person name="Asakawa T."/>
            <person name="Blechschmidt K."/>
            <person name="Bloom T."/>
            <person name="Borowsky M.L."/>
            <person name="Butler J."/>
            <person name="Cook A."/>
            <person name="Corum B."/>
            <person name="DeArellano K."/>
            <person name="DeCaprio D."/>
            <person name="Dooley K.T."/>
            <person name="Dorris L. III"/>
            <person name="Engels R."/>
            <person name="Gloeckner G."/>
            <person name="Hafez N."/>
            <person name="Hagopian D.S."/>
            <person name="Hall J.L."/>
            <person name="Ishikawa S.K."/>
            <person name="Jaffe D.B."/>
            <person name="Kamat A."/>
            <person name="Kudoh J."/>
            <person name="Lehmann R."/>
            <person name="Lokitsang T."/>
            <person name="Macdonald P."/>
            <person name="Major J.E."/>
            <person name="Matthews C.D."/>
            <person name="Mauceli E."/>
            <person name="Menzel U."/>
            <person name="Mihalev A.H."/>
            <person name="Minoshima S."/>
            <person name="Murayama Y."/>
            <person name="Naylor J.W."/>
            <person name="Nicol R."/>
            <person name="Nguyen C."/>
            <person name="O'Leary S.B."/>
            <person name="O'Neill K."/>
            <person name="Parker S.C.J."/>
            <person name="Polley A."/>
            <person name="Raymond C.K."/>
            <person name="Reichwald K."/>
            <person name="Rodriguez J."/>
            <person name="Sasaki T."/>
            <person name="Schilhabel M."/>
            <person name="Siddiqui R."/>
            <person name="Smith C.L."/>
            <person name="Sneddon T.P."/>
            <person name="Talamas J.A."/>
            <person name="Tenzin P."/>
            <person name="Topham K."/>
            <person name="Venkataraman V."/>
            <person name="Wen G."/>
            <person name="Yamazaki S."/>
            <person name="Young S.K."/>
            <person name="Zeng Q."/>
            <person name="Zimmer A.R."/>
            <person name="Rosenthal A."/>
            <person name="Birren B.W."/>
            <person name="Platzer M."/>
            <person name="Shimizu N."/>
            <person name="Lander E.S."/>
        </authorList>
    </citation>
    <scope>NUCLEOTIDE SEQUENCE [LARGE SCALE GENOMIC DNA]</scope>
</reference>
<reference key="4">
    <citation type="submission" date="2005-07" db="EMBL/GenBank/DDBJ databases">
        <authorList>
            <person name="Mural R.J."/>
            <person name="Istrail S."/>
            <person name="Sutton G."/>
            <person name="Florea L."/>
            <person name="Halpern A.L."/>
            <person name="Mobarry C.M."/>
            <person name="Lippert R."/>
            <person name="Walenz B."/>
            <person name="Shatkay H."/>
            <person name="Dew I."/>
            <person name="Miller J.R."/>
            <person name="Flanigan M.J."/>
            <person name="Edwards N.J."/>
            <person name="Bolanos R."/>
            <person name="Fasulo D."/>
            <person name="Halldorsson B.V."/>
            <person name="Hannenhalli S."/>
            <person name="Turner R."/>
            <person name="Yooseph S."/>
            <person name="Lu F."/>
            <person name="Nusskern D.R."/>
            <person name="Shue B.C."/>
            <person name="Zheng X.H."/>
            <person name="Zhong F."/>
            <person name="Delcher A.L."/>
            <person name="Huson D.H."/>
            <person name="Kravitz S.A."/>
            <person name="Mouchard L."/>
            <person name="Reinert K."/>
            <person name="Remington K.A."/>
            <person name="Clark A.G."/>
            <person name="Waterman M.S."/>
            <person name="Eichler E.E."/>
            <person name="Adams M.D."/>
            <person name="Hunkapiller M.W."/>
            <person name="Myers E.W."/>
            <person name="Venter J.C."/>
        </authorList>
    </citation>
    <scope>NUCLEOTIDE SEQUENCE [LARGE SCALE GENOMIC DNA]</scope>
</reference>
<reference key="5">
    <citation type="journal article" date="2004" name="Genome Res.">
        <title>The status, quality, and expansion of the NIH full-length cDNA project: the Mammalian Gene Collection (MGC).</title>
        <authorList>
            <consortium name="The MGC Project Team"/>
        </authorList>
    </citation>
    <scope>NUCLEOTIDE SEQUENCE [LARGE SCALE MRNA]</scope>
    <source>
        <tissue>Brain</tissue>
    </source>
</reference>
<reference key="6">
    <citation type="journal article" date="2016" name="Chem. Sci.">
        <title>Proteolysis Triggers Self-Assembly and Unmasks Innate Immune Function of a Human alpha-Defensin Peptide.</title>
        <authorList>
            <person name="Chairatana P."/>
            <person name="Chu H."/>
            <person name="Castillo P.A."/>
            <person name="Shen B."/>
            <person name="Bevins C.L."/>
            <person name="Nolan E.M."/>
        </authorList>
    </citation>
    <scope>PROTEIN SEQUENCE OF 20-23 AND 69-75</scope>
    <scope>FUNCTION</scope>
    <scope>SUBUNIT</scope>
    <scope>SUBCELLULAR LOCATION</scope>
    <scope>TISSUE SPECIFICITY</scope>
    <scope>PROTEOLYTIC CLEAVAGE AT ARG-68</scope>
    <scope>MASS SPECTROMETRY</scope>
</reference>
<reference key="7">
    <citation type="journal article" date="2005" name="Antimicrob. Agents Chemother.">
        <title>Antibacterial activity and specificity of the six human alpha-defensins.</title>
        <authorList>
            <person name="Ericksen B."/>
            <person name="Wu Z."/>
            <person name="Lu W."/>
            <person name="Lehrer R.I."/>
        </authorList>
    </citation>
    <scope>FUNCTION</scope>
    <scope>DISULFIDE BONDS</scope>
</reference>
<reference key="8">
    <citation type="journal article" date="2014" name="J. Am. Chem. Soc.">
        <title>Molecular basis for self-assembly of a human host-defense peptide that entraps bacterial pathogens.</title>
        <authorList>
            <person name="Chairatana P."/>
            <person name="Nolan E.M."/>
        </authorList>
    </citation>
    <scope>FUNCTION</scope>
    <scope>DISULFIDE BONDS</scope>
    <scope>MUTAGENESIS OF PHE-70; VAL-90; ILE-93; HIS-95 AND PHE-97</scope>
</reference>
<reference key="9">
    <citation type="journal article" date="2015" name="Mucosal Immunol.">
        <title>Paneth cell alpha-defensin 6 (HD-6) is an antimicrobial peptide.</title>
        <authorList>
            <person name="Schroeder B.O."/>
            <person name="Ehmann D."/>
            <person name="Precht J.C."/>
            <person name="Castillo P.A."/>
            <person name="Kuechler R."/>
            <person name="Berger J."/>
            <person name="Schaller M."/>
            <person name="Stange E.F."/>
            <person name="Wehkamp J."/>
        </authorList>
    </citation>
    <scope>FUNCTION</scope>
    <scope>MASS SPECTROMETRY</scope>
    <scope>DISULFIDE BONDS</scope>
    <scope>MUTAGENESIS OF HIS-95</scope>
</reference>
<reference key="10">
    <citation type="journal article" date="2017" name="Biochemistry">
        <title>Human alpha-Defensin 6 Self-Assembly Prevents Adhesion and Suppresses Virulence Traits of Candida albicans.</title>
        <authorList>
            <person name="Chairatana P."/>
            <person name="Chiang I.L."/>
            <person name="Nolan E.M."/>
        </authorList>
    </citation>
    <scope>FUNCTION</scope>
    <scope>MUTAGENESIS OF PHE-70</scope>
</reference>
<reference key="11">
    <citation type="journal article" date="2019" name="Proc. Natl. Acad. Sci. U.S.A.">
        <title>Paneth cell alpha-defensins HD-5 and HD-6 display differential degradation into active antimicrobial fragments.</title>
        <authorList>
            <person name="Ehmann D."/>
            <person name="Wendler J."/>
            <person name="Koeninger L."/>
            <person name="Larsen I.S."/>
            <person name="Klag T."/>
            <person name="Berger J."/>
            <person name="Marette A."/>
            <person name="Schaller M."/>
            <person name="Stange E.F."/>
            <person name="Malek N.P."/>
            <person name="Jensen B.A.H."/>
            <person name="Wehkamp J."/>
        </authorList>
    </citation>
    <scope>SUBUNIT</scope>
    <scope>DISULFIDE BONDS</scope>
</reference>
<reference evidence="13" key="12">
    <citation type="journal article" date="2006" name="Protein Sci.">
        <title>Crystal structures of human alpha-defensins HNP4, HD5, and HD6.</title>
        <authorList>
            <person name="Szyk A."/>
            <person name="Wu Z."/>
            <person name="Tucker K."/>
            <person name="Yang D."/>
            <person name="Lu W."/>
            <person name="Lubkowski J."/>
        </authorList>
    </citation>
    <scope>X-RAY CRYSTALLOGRAPHY (2.1 ANGSTROMS) OF 69-100</scope>
    <scope>FUNCTION</scope>
    <scope>SUBUNIT</scope>
    <scope>DISULFIDE BONDS</scope>
</reference>
<reference evidence="14" key="13">
    <citation type="journal article" date="2012" name="Science">
        <title>Human alpha-defensin 6 promotes mucosal innate immunity through self-assembled peptide nanonets.</title>
        <authorList>
            <person name="Chu H."/>
            <person name="Pazgier M."/>
            <person name="Jung G."/>
            <person name="Nuccio S.P."/>
            <person name="Castillo P.A."/>
            <person name="de Jong M.F."/>
            <person name="Winter M.G."/>
            <person name="Winter S.E."/>
            <person name="Wehkamp J."/>
            <person name="Shen B."/>
            <person name="Salzman N.H."/>
            <person name="Underwood M.A."/>
            <person name="Tsolis R.M."/>
            <person name="Young G.M."/>
            <person name="Lu W."/>
            <person name="Lehrer R.I."/>
            <person name="Baumler A.J."/>
            <person name="Bevins C.L."/>
        </authorList>
    </citation>
    <scope>X-RAY CRYSTALLOGRAPHY (1.95 ANGSTROMS) OF 69-100 OF MUTANT TRP-95</scope>
    <scope>FUNCTION</scope>
    <scope>SUBUNIT</scope>
    <scope>INTERACTION WITH Y.ENTEROCOLITICA INVASIN AND S.TYPHIMURIUM FLIC/FLAGELLIN</scope>
    <scope>DISULFIDE BONDS</scope>
    <scope>MUTAGENESIS OF HIS-95</scope>
</reference>
<dbReference type="EMBL" id="M98331">
    <property type="protein sequence ID" value="AAB59357.1"/>
    <property type="molecule type" value="mRNA"/>
</dbReference>
<dbReference type="EMBL" id="U33317">
    <property type="protein sequence ID" value="AAC50382.1"/>
    <property type="status" value="ALT_SEQ"/>
    <property type="molecule type" value="Genomic_DNA"/>
</dbReference>
<dbReference type="EMBL" id="AF200455">
    <property type="protein sequence ID" value="AAT68876.1"/>
    <property type="molecule type" value="Genomic_DNA"/>
</dbReference>
<dbReference type="EMBL" id="CH471153">
    <property type="protein sequence ID" value="EAW80484.1"/>
    <property type="molecule type" value="Genomic_DNA"/>
</dbReference>
<dbReference type="EMBL" id="BC069667">
    <property type="protein sequence ID" value="AAH69667.1"/>
    <property type="molecule type" value="mRNA"/>
</dbReference>
<dbReference type="EMBL" id="BC069710">
    <property type="protein sequence ID" value="AAH69710.1"/>
    <property type="molecule type" value="mRNA"/>
</dbReference>
<dbReference type="EMBL" id="BC069728">
    <property type="protein sequence ID" value="AAH69728.1"/>
    <property type="molecule type" value="mRNA"/>
</dbReference>
<dbReference type="EMBL" id="BC069769">
    <property type="protein sequence ID" value="AAH69769.1"/>
    <property type="molecule type" value="mRNA"/>
</dbReference>
<dbReference type="EMBL" id="BC093951">
    <property type="protein sequence ID" value="AAH93951.1"/>
    <property type="molecule type" value="mRNA"/>
</dbReference>
<dbReference type="EMBL" id="BC093953">
    <property type="protein sequence ID" value="AAH93953.1"/>
    <property type="molecule type" value="mRNA"/>
</dbReference>
<dbReference type="CCDS" id="CCDS5960.1"/>
<dbReference type="PIR" id="S27016">
    <property type="entry name" value="S27016"/>
</dbReference>
<dbReference type="RefSeq" id="NP_001917.1">
    <property type="nucleotide sequence ID" value="NM_001926.4"/>
</dbReference>
<dbReference type="PDB" id="1ZMQ">
    <property type="method" value="X-ray"/>
    <property type="resolution" value="2.10 A"/>
    <property type="chains" value="A/B/C/D=69-100"/>
</dbReference>
<dbReference type="PDB" id="3QTE">
    <property type="method" value="X-ray"/>
    <property type="resolution" value="1.95 A"/>
    <property type="chains" value="A/B/C/D=69-100"/>
</dbReference>
<dbReference type="PDBsum" id="1ZMQ"/>
<dbReference type="PDBsum" id="3QTE"/>
<dbReference type="SMR" id="Q01524"/>
<dbReference type="BioGRID" id="108035">
    <property type="interactions" value="63"/>
</dbReference>
<dbReference type="FunCoup" id="Q01524">
    <property type="interactions" value="196"/>
</dbReference>
<dbReference type="IntAct" id="Q01524">
    <property type="interactions" value="18"/>
</dbReference>
<dbReference type="STRING" id="9606.ENSP00000297436"/>
<dbReference type="TCDB" id="1.C.19.1.7">
    <property type="family name" value="the defensin (defensin) family"/>
</dbReference>
<dbReference type="iPTMnet" id="Q01524"/>
<dbReference type="PhosphoSitePlus" id="Q01524"/>
<dbReference type="BioMuta" id="DEFA6"/>
<dbReference type="DMDM" id="399354"/>
<dbReference type="MassIVE" id="Q01524"/>
<dbReference type="PaxDb" id="9606-ENSP00000297436"/>
<dbReference type="PeptideAtlas" id="Q01524"/>
<dbReference type="ProteomicsDB" id="57965"/>
<dbReference type="Antibodypedia" id="8201">
    <property type="antibodies" value="113 antibodies from 21 providers"/>
</dbReference>
<dbReference type="DNASU" id="1671"/>
<dbReference type="Ensembl" id="ENST00000297436.3">
    <property type="protein sequence ID" value="ENSP00000297436.2"/>
    <property type="gene ID" value="ENSG00000164822.5"/>
</dbReference>
<dbReference type="Ensembl" id="ENST00000646187.2">
    <property type="protein sequence ID" value="ENSP00000494361.1"/>
    <property type="gene ID" value="ENSG00000285136.2"/>
</dbReference>
<dbReference type="GeneID" id="1671"/>
<dbReference type="KEGG" id="hsa:1671"/>
<dbReference type="MANE-Select" id="ENST00000297436.3">
    <property type="protein sequence ID" value="ENSP00000297436.2"/>
    <property type="RefSeq nucleotide sequence ID" value="NM_001926.4"/>
    <property type="RefSeq protein sequence ID" value="NP_001917.1"/>
</dbReference>
<dbReference type="UCSC" id="uc003wqt.4">
    <property type="organism name" value="human"/>
</dbReference>
<dbReference type="AGR" id="HGNC:2765"/>
<dbReference type="CTD" id="1671"/>
<dbReference type="DisGeNET" id="1671"/>
<dbReference type="GeneCards" id="DEFA6"/>
<dbReference type="HGNC" id="HGNC:2765">
    <property type="gene designation" value="DEFA6"/>
</dbReference>
<dbReference type="HPA" id="ENSG00000164822">
    <property type="expression patterns" value="Tissue enriched (intestine)"/>
</dbReference>
<dbReference type="MIM" id="600471">
    <property type="type" value="gene"/>
</dbReference>
<dbReference type="neXtProt" id="NX_Q01524"/>
<dbReference type="OpenTargets" id="ENSG00000164822"/>
<dbReference type="PharmGKB" id="PA27242"/>
<dbReference type="VEuPathDB" id="HostDB:ENSG00000164822"/>
<dbReference type="eggNOG" id="ENOG502T2EX">
    <property type="taxonomic scope" value="Eukaryota"/>
</dbReference>
<dbReference type="GeneTree" id="ENSGT00940000153268"/>
<dbReference type="HOGENOM" id="CLU_160803_3_0_1"/>
<dbReference type="InParanoid" id="Q01524"/>
<dbReference type="OMA" id="RSFTCHC"/>
<dbReference type="OrthoDB" id="9484210at2759"/>
<dbReference type="PAN-GO" id="Q01524">
    <property type="GO annotations" value="8 GO annotations based on evolutionary models"/>
</dbReference>
<dbReference type="PhylomeDB" id="Q01524"/>
<dbReference type="TreeFam" id="TF338414"/>
<dbReference type="PathwayCommons" id="Q01524"/>
<dbReference type="Reactome" id="R-HSA-1461973">
    <property type="pathway name" value="Defensins"/>
</dbReference>
<dbReference type="Reactome" id="R-HSA-1462054">
    <property type="pathway name" value="Alpha-defensins"/>
</dbReference>
<dbReference type="SignaLink" id="Q01524"/>
<dbReference type="BioGRID-ORCS" id="1671">
    <property type="hits" value="7 hits in 1105 CRISPR screens"/>
</dbReference>
<dbReference type="ChiTaRS" id="DEFA6">
    <property type="organism name" value="human"/>
</dbReference>
<dbReference type="EvolutionaryTrace" id="Q01524"/>
<dbReference type="GeneWiki" id="DEFA6"/>
<dbReference type="GenomeRNAi" id="1671"/>
<dbReference type="Pharos" id="Q01524">
    <property type="development level" value="Tbio"/>
</dbReference>
<dbReference type="PRO" id="PR:Q01524"/>
<dbReference type="Proteomes" id="UP000005640">
    <property type="component" value="Chromosome 8"/>
</dbReference>
<dbReference type="RNAct" id="Q01524">
    <property type="molecule type" value="protein"/>
</dbReference>
<dbReference type="Bgee" id="ENSG00000164822">
    <property type="expression patterns" value="Expressed in duodenum and 73 other cell types or tissues"/>
</dbReference>
<dbReference type="GO" id="GO:0005576">
    <property type="term" value="C:extracellular region"/>
    <property type="evidence" value="ECO:0000304"/>
    <property type="project" value="Reactome"/>
</dbReference>
<dbReference type="GO" id="GO:0005615">
    <property type="term" value="C:extracellular space"/>
    <property type="evidence" value="ECO:0000318"/>
    <property type="project" value="GO_Central"/>
</dbReference>
<dbReference type="GO" id="GO:0005796">
    <property type="term" value="C:Golgi lumen"/>
    <property type="evidence" value="ECO:0000304"/>
    <property type="project" value="Reactome"/>
</dbReference>
<dbReference type="GO" id="GO:0030133">
    <property type="term" value="C:transport vesicle"/>
    <property type="evidence" value="ECO:0007669"/>
    <property type="project" value="UniProtKB-SubCell"/>
</dbReference>
<dbReference type="GO" id="GO:0042803">
    <property type="term" value="F:protein homodimerization activity"/>
    <property type="evidence" value="ECO:0000314"/>
    <property type="project" value="UniProtKB"/>
</dbReference>
<dbReference type="GO" id="GO:0019731">
    <property type="term" value="P:antibacterial humoral response"/>
    <property type="evidence" value="ECO:0000318"/>
    <property type="project" value="GO_Central"/>
</dbReference>
<dbReference type="GO" id="GO:0061844">
    <property type="term" value="P:antimicrobial humoral immune response mediated by antimicrobial peptide"/>
    <property type="evidence" value="ECO:0000318"/>
    <property type="project" value="GO_Central"/>
</dbReference>
<dbReference type="GO" id="GO:0071222">
    <property type="term" value="P:cellular response to lipopolysaccharide"/>
    <property type="evidence" value="ECO:0000318"/>
    <property type="project" value="GO_Central"/>
</dbReference>
<dbReference type="GO" id="GO:0050832">
    <property type="term" value="P:defense response to fungus"/>
    <property type="evidence" value="ECO:0007669"/>
    <property type="project" value="UniProtKB-KW"/>
</dbReference>
<dbReference type="GO" id="GO:0050829">
    <property type="term" value="P:defense response to Gram-negative bacterium"/>
    <property type="evidence" value="ECO:0000318"/>
    <property type="project" value="GO_Central"/>
</dbReference>
<dbReference type="GO" id="GO:0050830">
    <property type="term" value="P:defense response to Gram-positive bacterium"/>
    <property type="evidence" value="ECO:0000318"/>
    <property type="project" value="GO_Central"/>
</dbReference>
<dbReference type="GO" id="GO:0051673">
    <property type="term" value="P:disruption of plasma membrane integrity in another organism"/>
    <property type="evidence" value="ECO:0000318"/>
    <property type="project" value="GO_Central"/>
</dbReference>
<dbReference type="GO" id="GO:0002227">
    <property type="term" value="P:innate immune response in mucosa"/>
    <property type="evidence" value="ECO:0000318"/>
    <property type="project" value="GO_Central"/>
</dbReference>
<dbReference type="GO" id="GO:0031640">
    <property type="term" value="P:killing of cells of another organism"/>
    <property type="evidence" value="ECO:0007669"/>
    <property type="project" value="UniProtKB-KW"/>
</dbReference>
<dbReference type="InterPro" id="IPR016327">
    <property type="entry name" value="Alpha-defensin"/>
</dbReference>
<dbReference type="InterPro" id="IPR006081">
    <property type="entry name" value="Alpha-defensin_C"/>
</dbReference>
<dbReference type="InterPro" id="IPR002366">
    <property type="entry name" value="Alpha-defensin_N"/>
</dbReference>
<dbReference type="InterPro" id="IPR006080">
    <property type="entry name" value="Beta/alpha-defensin_C"/>
</dbReference>
<dbReference type="PANTHER" id="PTHR11876">
    <property type="entry name" value="ALPHA-DEFENSIN 1"/>
    <property type="match status" value="1"/>
</dbReference>
<dbReference type="PANTHER" id="PTHR11876:SF3">
    <property type="entry name" value="DEFENSIN-6"/>
    <property type="match status" value="1"/>
</dbReference>
<dbReference type="Pfam" id="PF00323">
    <property type="entry name" value="Defensin_1"/>
    <property type="match status" value="1"/>
</dbReference>
<dbReference type="Pfam" id="PF00879">
    <property type="entry name" value="Defensin_propep"/>
    <property type="match status" value="1"/>
</dbReference>
<dbReference type="PIRSF" id="PIRSF001875">
    <property type="entry name" value="Alpha-defensin"/>
    <property type="match status" value="1"/>
</dbReference>
<dbReference type="SMART" id="SM01418">
    <property type="entry name" value="Defensin_propep"/>
    <property type="match status" value="1"/>
</dbReference>
<dbReference type="SMART" id="SM00048">
    <property type="entry name" value="DEFSN"/>
    <property type="match status" value="1"/>
</dbReference>
<dbReference type="PROSITE" id="PS00269">
    <property type="entry name" value="DEFENSIN"/>
    <property type="match status" value="1"/>
</dbReference>
<accession>Q01524</accession>
<accession>Q6EZF9</accession>
<organism>
    <name type="scientific">Homo sapiens</name>
    <name type="common">Human</name>
    <dbReference type="NCBI Taxonomy" id="9606"/>
    <lineage>
        <taxon>Eukaryota</taxon>
        <taxon>Metazoa</taxon>
        <taxon>Chordata</taxon>
        <taxon>Craniata</taxon>
        <taxon>Vertebrata</taxon>
        <taxon>Euteleostomi</taxon>
        <taxon>Mammalia</taxon>
        <taxon>Eutheria</taxon>
        <taxon>Euarchontoglires</taxon>
        <taxon>Primates</taxon>
        <taxon>Haplorrhini</taxon>
        <taxon>Catarrhini</taxon>
        <taxon>Hominidae</taxon>
        <taxon>Homo</taxon>
    </lineage>
</organism>
<protein>
    <recommendedName>
        <fullName>Defensin-6</fullName>
    </recommendedName>
    <alternativeName>
        <fullName>Defensin, alpha 6</fullName>
    </alternativeName>
</protein>
<keyword id="KW-0002">3D-structure</keyword>
<keyword id="KW-0044">Antibiotic</keyword>
<keyword id="KW-0929">Antimicrobial</keyword>
<keyword id="KW-0968">Cytoplasmic vesicle</keyword>
<keyword id="KW-0211">Defensin</keyword>
<keyword id="KW-0903">Direct protein sequencing</keyword>
<keyword id="KW-1015">Disulfide bond</keyword>
<keyword id="KW-0295">Fungicide</keyword>
<keyword id="KW-0391">Immunity</keyword>
<keyword id="KW-0399">Innate immunity</keyword>
<keyword id="KW-1267">Proteomics identification</keyword>
<keyword id="KW-1185">Reference proteome</keyword>
<keyword id="KW-0964">Secreted</keyword>
<keyword id="KW-0732">Signal</keyword>
<name>DEF6_HUMAN</name>